<organism>
    <name type="scientific">Spiroplasma virus SpV1-C74</name>
    <name type="common">SpV1</name>
    <dbReference type="NCBI Taxonomy" id="185959"/>
    <lineage>
        <taxon>Viruses</taxon>
        <taxon>Monodnaviria</taxon>
        <taxon>Loebvirae</taxon>
        <taxon>Hofneiviricota</taxon>
        <taxon>Faserviricetes</taxon>
        <taxon>Tubulavirales</taxon>
        <taxon>Plectroviridae</taxon>
        <taxon>Vespertiliovirus</taxon>
        <taxon>Vespertiliovirus C74</taxon>
    </lineage>
</organism>
<sequence length="67" mass="8367">MIIEFNLLVILLVQMPLSFYMLYRLCYLLFCFLECFLNLFKKCGVFKNAKWLTRIQRVFYLYLFVYR</sequence>
<reference key="1">
    <citation type="journal article" date="1996" name="Curr. Microbiol.">
        <title>Spiroplasma citri Virus SpV1: Characterization of viral sequences present in the spiroplasmal host chromosome.</title>
        <authorList>
            <person name="Bebear C.M."/>
            <person name="Aullo P."/>
            <person name="Bove J."/>
            <person name="Renaudin J."/>
        </authorList>
    </citation>
    <scope>NUCLEOTIDE SEQUENCE [GENOMIC DNA]</scope>
</reference>
<keyword id="KW-1043">Host membrane</keyword>
<keyword id="KW-0472">Membrane</keyword>
<keyword id="KW-1185">Reference proteome</keyword>
<keyword id="KW-0812">Transmembrane</keyword>
<keyword id="KW-1133">Transmembrane helix</keyword>
<comment type="subcellular location">
    <subcellularLocation>
        <location evidence="2">Host membrane</location>
        <topology evidence="2">Single-pass membrane protein</topology>
    </subcellularLocation>
</comment>
<comment type="similarity">
    <text evidence="2">Belongs to the plectrovirus ORF11 family.</text>
</comment>
<dbReference type="EMBL" id="U28974">
    <property type="protein sequence ID" value="AAA85018.1"/>
    <property type="molecule type" value="Genomic_DNA"/>
</dbReference>
<dbReference type="RefSeq" id="NP_620632.1">
    <property type="nucleotide sequence ID" value="NC_003793.1"/>
</dbReference>
<dbReference type="SMR" id="Q88425"/>
<dbReference type="KEGG" id="vg:944352"/>
<dbReference type="Proteomes" id="UP000001764">
    <property type="component" value="Genome"/>
</dbReference>
<dbReference type="GO" id="GO:0033644">
    <property type="term" value="C:host cell membrane"/>
    <property type="evidence" value="ECO:0007669"/>
    <property type="project" value="UniProtKB-SubCell"/>
</dbReference>
<dbReference type="GO" id="GO:0016020">
    <property type="term" value="C:membrane"/>
    <property type="evidence" value="ECO:0007669"/>
    <property type="project" value="UniProtKB-KW"/>
</dbReference>
<accession>Q88425</accession>
<feature type="chain" id="PRO_0000372071" description="Uncharacterized protein ORF11">
    <location>
        <begin position="1"/>
        <end position="67"/>
    </location>
</feature>
<feature type="transmembrane region" description="Helical" evidence="1">
    <location>
        <begin position="26"/>
        <end position="46"/>
    </location>
</feature>
<evidence type="ECO:0000255" key="1"/>
<evidence type="ECO:0000305" key="2"/>
<gene>
    <name type="ORF">ORF11</name>
</gene>
<protein>
    <recommendedName>
        <fullName>Uncharacterized protein ORF11</fullName>
    </recommendedName>
</protein>
<name>ORF11_SPV1C</name>
<proteinExistence type="inferred from homology"/>
<organismHost>
    <name type="scientific">Spiroplasma melliferum</name>
    <dbReference type="NCBI Taxonomy" id="2134"/>
</organismHost>